<reference key="1">
    <citation type="journal article" date="2012" name="Sci. Rep.">
        <title>Genomic perspectives on the evolution of fungal entomopathogenicity in Beauveria bassiana.</title>
        <authorList>
            <person name="Xiao G."/>
            <person name="Ying S.-H."/>
            <person name="Zheng P."/>
            <person name="Wang Z.-L."/>
            <person name="Zhang S."/>
            <person name="Xie X.-Q."/>
            <person name="Shang Y."/>
            <person name="St Leger R.J."/>
            <person name="Zhao G.-P."/>
            <person name="Wang C."/>
            <person name="Feng M.-G."/>
        </authorList>
    </citation>
    <scope>NUCLEOTIDE SEQUENCE [LARGE SCALE GENOMIC DNA]</scope>
    <source>
        <strain>ARSEF 2860</strain>
    </source>
</reference>
<reference key="2">
    <citation type="journal article" date="2007" name="ChemBioChem">
        <title>Biosynthesis of the 2-pyridone tenellin in the insect pathogenic fungus Beauveria bassiana.</title>
        <authorList>
            <person name="Eley K.L."/>
            <person name="Halo L.M."/>
            <person name="Song Z."/>
            <person name="Powles H."/>
            <person name="Cox R.J."/>
            <person name="Bailey A.M."/>
            <person name="Lazarus C.M."/>
            <person name="Simpson T.J."/>
        </authorList>
    </citation>
    <scope>FUNCTION</scope>
    <scope>PATHWAY</scope>
    <scope>CATALYTIC ACTIVITY</scope>
    <scope>DOMAIN</scope>
    <scope>DISRUPTION PHENOTYPE</scope>
</reference>
<reference key="3">
    <citation type="journal article" date="2008" name="ChemBioChem">
        <title>Authentic heterologous expression of the tenellin iterative polyketide synthase nonribosomal peptide synthetase requires coexpression with an enoyl reductase.</title>
        <authorList>
            <person name="Halo L.M."/>
            <person name="Marshall J.W."/>
            <person name="Yakasai A.A."/>
            <person name="Song Z."/>
            <person name="Butts C.P."/>
            <person name="Crump M.P."/>
            <person name="Heneghan M."/>
            <person name="Bailey A.M."/>
            <person name="Simpson T.J."/>
            <person name="Lazarus C.M."/>
            <person name="Cox R.J."/>
        </authorList>
    </citation>
    <scope>FUNCTION</scope>
    <scope>CATALYTIC ACTIVITY</scope>
    <scope>PATHWAY</scope>
</reference>
<reference key="4">
    <citation type="journal article" date="2010" name="ChemBioChem">
        <title>First heterologous reconstruction of a complete functional fungal biosynthetic multigene cluster.</title>
        <authorList>
            <person name="Heneghan M.N."/>
            <person name="Yakasai A.A."/>
            <person name="Halo L.M."/>
            <person name="Song Z."/>
            <person name="Bailey A.M."/>
            <person name="Simpson T.J."/>
            <person name="Cox R.J."/>
            <person name="Lazarus C.M."/>
        </authorList>
    </citation>
    <scope>FUNCTION</scope>
    <scope>PATHWAY</scope>
</reference>
<reference key="5">
    <citation type="journal article" date="2021" name="MBio">
        <title>Inductive production of the iron-chelating 2-pyridones benefits the producing fungus to compete for diverse niches.</title>
        <authorList>
            <person name="Chen B."/>
            <person name="Sun Y."/>
            <person name="Li S."/>
            <person name="Yin Y."/>
            <person name="Wang C."/>
        </authorList>
    </citation>
    <scope>FUNCTION</scope>
    <scope>DISRUPTION PHENOTYPE</scope>
    <scope>PATHWAY</scope>
    <scope>INDUCTION</scope>
</reference>
<sequence>MSPMKQNESESHSVSEPIAIVGSAYRFPGGCNTPSKLWDLLQQPRDILKELDPERLNLRRYYHPDGETHGSTDVSNKAYTLEEDISRFDASFFGISPLEAASMDPQQRTLLEVVYESTETAGIPLDKLRGSLTSVHVGVMTTDWAQVQRRDPETMPQYTATGIASSIISNRISYIFDLKGASETIDTACSSSLVALHNAARALQSGDCEKAIVAGVNLILDPDPFIYESKLHMLSPDARSRMWDAAANGYARGEGAAAVVLKTLGHALRDGDRIEGVIRSTFVNSDGLSSGLTMPSSAAQTALIRQTYRKAGLDPVRDRPQFFECHGTGTRAGDPVEARAISDAFLPSHRTNGGGAATTVDDPLYVGSIKTVVGHLEGCAGLAGLVKVLLSLKHGIIPPNLWFDKLNPEIARYYGPLQIPTKAIPWPELAPGTPLRASVNSFGFGGTNAHAIIERYDASQSYCSQWRRDMTEEKTIARTQNNDDVEIPVPLVLTAKTGGALWRTVDAYAQHLRQHPKLRVANLSQFMHSRRSTHRVRASFSGASREELVENMANFVQAHAADAKSPASQNRIGYSPLLIDPKEVSGILGIFTGQGAQWPAMGRDMMHQSPLFRKTIADCESVLQALPLKDAPAWSLSEELKKDASTSRLGEAEISQPLCTAVQLALVNVLTASGVYFDAVVGHSSGEIAATYASGIINLKAAMQIAYYRGLYAKLARGQSDEAGGMMAAGLSMDDAVKLCRLPEFEGRIQVAASNAPQSVTLSGDKEAIKAAKAKLDADGVFARELKVDTAYHSHHMLPCAEPYLKALLACDIQVSAPTKTPGRKCMWSSSVRGDAELLRRDRNLDSLKGPYWVANMVQTVQFSRAIQSTIWHGGPFDLAVEVGPHPALKGPTEQTLKAVYGSAPLYTGVLSRGANDAVAFSTAIGNIWSHLGPAFVDITGYQSIFSGTCEGHGGSEAPFISDLPLYPWDHDEEYWRESRISRRYRTGKDESHELLGRRMPDDNEREIRWRNLLKVSELPWTQGHRVLGEVLLPGAAYISMAIEAGRRLALDQGREVSLLEVSDVDILRPVVVADNKEGTETLFTVRLLDEYASTGKKSDELMTASFSFYIYNSPASTSIVHTCEGRIAVHLGAKLGSEAAANSTPQLPPREPSVSNLQQLDCEKLYSVFETIGLEYSGAFRRIVSSSRCLGHATATASWPTADLNDCYLVHPAILDVAFQTIFVARAHPDSGQLSSALLPSRIERVRVVPSLAMGSKLQNNENFNAAIDSWALNQTASSLTGNINVYDADSERALIQVEGFEVRAVGEPDASKDRLLFYETVWGRDISIMGLSDPIRDETSDAMVQNLSEAIERVSLFYVRQLMGELSTADRRQANWYHTRMLAAFDHHLAKVHEETHLHLRPEWLADDWTVIQTIDEAYPDAVELQMLHAVGQNVADVIRGKKHLLEVLRVDNLLDRLYTEDKGMHMANLFLANALKEITFKFPRCKILEIGAGTGATTWAALSAIGEAFDTYTYTDLSVGFFENAVERFSAFRHRMVFRALDIEKDPASQSFDLNSYDIIIATNVLHATRNLGVTLGNVRSLLKPGGYLLLNEKTGPDSLRATFNFGGLEGWWLAEEKERQLSPLMSPDGWDAQLQKAQFSGVDHIVHDVQEDQQDKQQNSMIMSQAVDDTFYARLSPLSEMANLLPMNEPLLIIGGQTTATLKMIKEIQKLLPRQWRHKVRLIASVNHLEAEGVPAHSNVICLQELDRGLFTTAMTSKCLDALKTLFINTRNLLWVTNAQHSSSMTPRASMFRGITRVLDGEIPHIRTQVLGIEPRATSSATARNLLEAFLRLRSDDGRHAANVDEDGADGSSQQVLWLHEPEAELLSNGTMMIPRVKARKSLNDTYLASTRAISTTVDARCVSVQAVAGPAKMLLRPVEDFAVEHAISSQSTDSKVHIQVESTLHIPEALDGTCLYLVCGWTRTAETSVPVIALSTSNASIVAVESKAVAMIDEADVKPETLFRVFQHMAMQALDSAVGRHGQGQSTALIYGADEELAKLTSERFAVRESKVYFASTRTSAPGDWLKVQPLLSKFALSQMMPADVEVFIDCLGDTESFDACRTLESCLSTTSTVHRLDACLLSRMSQCSPDTLADAYSHAKTQSNAEFSWNGNVQTFTAAELAGKLSHSLMHSVYMTDWQEKDSILVTVPPLQTRGLFKSDRTYLMVGAAGGLGTSICRWMVRNGARHVVVTSRNPKADPEMLNEARRYGAAVKVVPMDACSKDCVQTVVDMIRDTMPPIAGVCNAAMVLRDKLFLDMNVDHMNNVLGPKMQGTEHLDSIFAQEPLDFFVLLSSSAAILNNTGQSNYHCANLYMDSLVTNRRSRGLAASIIHVGHVCDTGYVARLVDDSKVQMSLGTTRVMSVSETDVHHAFAEAVRGGQPDSRSGSHNIIMGIEPPTKPLDVAKRKPVWISDPRLGHMLPFSTLENQMVASEQAAASAADSLAQQVSEATTDEEAAAAALKGFATKLEGILLLPLGSIGEDSAGRPVTDLGIDSLVAVEIRTWFLKQLRVDVPVMKILGGSTVGQLSALAAKLARQDAKKRAQLEEASGNQPVALPPLNDKETGPSKKGKAQEFPETVQVVGTAAERTEPLVLEASDRGGSSTANFTTSSSVSELDDSLQESTLQSSENNGESTPSKSSNCNSDSGSDNQAPREISSNGFFTQPAATARPNVLREAPMSPAQSRIWFLSKHIAEPDAYNMVFHYRVRGPLSMVRLRHALQTVTNHHECLCMCFYASADNGQPMQGLLASSASQMTIVPGGEEQDLQRELRKLKTRVWSVESGQTLELVVVGPRPGTAAAEEEEFSLLFGYHHIVMDAISFSIFLADLDKAYRMLPLDKASAGSHLDLAAHQRQQEHAGAWKESLEFWQAEFETIPEMLPPLSVALPTLQRGAVGTHRVLRELAHEQGGDAAIKKTCKNLRVSPFNLHIAVLQVVIARLGSIEDVCVGIVDANRSDSRASRMVGCFVNMLPVRSRILPSATLADVARAASSKALAAFAHGQVPLDSILDKVKAPRPAGSTPLFQVALNYRPAAAIASKQSLGGECEMELLADDFKDAENPFEISVLVSEMPGGRIAVEVVCQKSRYTMQATEALLDAYLNVLAGFLSDTAQSVGDCVVHDQSKVEHALDLGKGAQKSFGWPRTLSERVMSICQQHSTKSAIKDGRNELSYAQLASKVNHTASALVNAGCSVGSRIAVLCNPSIDAIVAMLAILHIGGVYVPLDTSLPEARHQSLASNCTPSLIISHAATRERAHKLSAVISAPGHEPARELTLDDLSPDETGYMAPLNAEPNAPAILLYTSGSTGTPKGVLLTQANFGNHIALKTDILGLQRGECVLQQSSLGFDMSLVQVFCALANGGCLVIVPQDVRRDPMELTSLMAQHKVSLTIATPSEYLAWLQYGSDALAQATSWKHLCMGGEPIPQLLKDELRRRLERKDLVVVSNCYGPTETTAAISFQSIALDSQDSHEQLPGESELANYAVGKALPNYSIRIRDPAGGAWLPVNHTGEIVIGGAGVALGYLDMPEETRARFLQTPGEEDGMLLYRTGDKGRLLSDGTLLCFGRITGDNQVKLRGLRIELGEVEAALLQASQGLIHTAVVSRRGDVLVAHCARSHESSRETTGGGGEQQDAATAILRRVSELLPQYSVPAAIALLPSLPTNANGKLDRTAIAALPLSPQDEAAAATSPSNDNNNNNTPSGGGGEKMTVRQGELRLLWERVLPRDATTTTTTNSVRITPESDFFLRGGNSLLLMKLQAAIRESMGVRVSTKALYQASTLSGMARCVAEQRSDDDEAEEDIDWAAEVAVPPSMLAQIEKLQHSSASSSSSSSSSSAGSSSTQRPRKTSGLQILLTGATGFLGGQLLERLVQSPRVSTVHCVAVPVDEQSLLEPFLQQQADGTRRKVRCYIGNLAAPALGLTAADQTALSQTADVIVHAGSMGHCLNTYATLSAPNFASTRHLCALALSRSPPIPLAFASSNRVALLTGSTAPPPGSAAAFPPPPGAQGFTASKWASEAFLEKLTASMSDVSKTKTKTTTTVMPWRVSIHRPCALISDRAPNSDALNAILRYSTSMRCVPSLPEHRAEGYLDFGQVDKVVEEMVGDILGLADERPQEGPAVVYRHHSGGVKVPIHEFREHMESVYGGRFESVQLGQWIIRAVDAGMDPLISAYLETFLEGDASMVFPYMGEQAV</sequence>
<feature type="chain" id="PRO_0000455686" description="Tenellin synthetase">
    <location>
        <begin position="1"/>
        <end position="4235"/>
    </location>
</feature>
<feature type="domain" description="Ketosynthase family 3 (KS3)" evidence="4">
    <location>
        <begin position="15"/>
        <end position="455"/>
    </location>
</feature>
<feature type="domain" description="PKS/mFAS DH" evidence="5">
    <location>
        <begin position="993"/>
        <end position="1313"/>
    </location>
</feature>
<feature type="domain" description="Carrier 1" evidence="3">
    <location>
        <begin position="2500"/>
        <end position="2580"/>
    </location>
</feature>
<feature type="domain" description="Carrier 2" evidence="3">
    <location>
        <begin position="3748"/>
        <end position="3833"/>
    </location>
</feature>
<feature type="region of interest" description="Malonyl-CoA:ACP transacylase (MAT) domain" evidence="1 2">
    <location>
        <begin position="590"/>
        <end position="924"/>
    </location>
</feature>
<feature type="region of interest" description="Dehydratase (DH) domain" evidence="1 2">
    <location>
        <begin position="993"/>
        <end position="1310"/>
    </location>
</feature>
<feature type="region of interest" description="N-terminal hotdog fold" evidence="5">
    <location>
        <begin position="993"/>
        <end position="1135"/>
    </location>
</feature>
<feature type="region of interest" description="C-terminal hotdog fold" evidence="5">
    <location>
        <begin position="1158"/>
        <end position="1313"/>
    </location>
</feature>
<feature type="region of interest" description="Methyltransferase (MT) domain" evidence="1 2">
    <location>
        <begin position="1459"/>
        <end position="1652"/>
    </location>
</feature>
<feature type="region of interest" description="Ketoreductase (KR) domain" evidence="1 2">
    <location>
        <begin position="2208"/>
        <end position="2381"/>
    </location>
</feature>
<feature type="region of interest" description="Disordered" evidence="6">
    <location>
        <begin position="2587"/>
        <end position="2709"/>
    </location>
</feature>
<feature type="region of interest" description="Condensation (C) domain" evidence="1 2">
    <location>
        <begin position="2720"/>
        <end position="3163"/>
    </location>
</feature>
<feature type="region of interest" description="Adenylation (A) (KR) domain" evidence="1 2">
    <location>
        <begin position="3197"/>
        <end position="3609"/>
    </location>
</feature>
<feature type="region of interest" description="Disordered" evidence="6">
    <location>
        <begin position="3724"/>
        <end position="3750"/>
    </location>
</feature>
<feature type="region of interest" description="Disordered" evidence="6">
    <location>
        <begin position="3860"/>
        <end position="3889"/>
    </location>
</feature>
<feature type="region of interest" description="Reductase (RED) domain" evidence="1 2">
    <location>
        <begin position="3896"/>
        <end position="4141"/>
    </location>
</feature>
<feature type="compositionally biased region" description="Basic and acidic residues" evidence="6">
    <location>
        <begin position="2605"/>
        <end position="2619"/>
    </location>
</feature>
<feature type="compositionally biased region" description="Polar residues" evidence="6">
    <location>
        <begin position="2645"/>
        <end position="2659"/>
    </location>
</feature>
<feature type="compositionally biased region" description="Polar residues" evidence="6">
    <location>
        <begin position="2666"/>
        <end position="2678"/>
    </location>
</feature>
<feature type="compositionally biased region" description="Low complexity" evidence="6">
    <location>
        <begin position="2679"/>
        <end position="2695"/>
    </location>
</feature>
<feature type="compositionally biased region" description="Low complexity" evidence="6">
    <location>
        <begin position="3726"/>
        <end position="3742"/>
    </location>
</feature>
<feature type="compositionally biased region" description="Low complexity" evidence="6">
    <location>
        <begin position="3865"/>
        <end position="3882"/>
    </location>
</feature>
<feature type="active site" description="For beta-ketoacyl synthase activity" evidence="4">
    <location>
        <position position="189"/>
    </location>
</feature>
<feature type="active site" description="For beta-ketoacyl synthase activity" evidence="4">
    <location>
        <position position="326"/>
    </location>
</feature>
<feature type="active site" description="For beta-ketoacyl synthase activity" evidence="4">
    <location>
        <position position="375"/>
    </location>
</feature>
<feature type="active site" description="Proton acceptor; for dehydratase activity" evidence="5">
    <location>
        <position position="1025"/>
    </location>
</feature>
<feature type="active site" description="Proton donor; for dehydratase activity" evidence="5">
    <location>
        <position position="1217"/>
    </location>
</feature>
<feature type="modified residue" description="O-(pantetheine 4'-phosphoryl)serine" evidence="3">
    <location>
        <position position="2540"/>
    </location>
</feature>
<feature type="modified residue" description="O-(pantetheine 4'-phosphoryl)serine" evidence="3">
    <location>
        <position position="3793"/>
    </location>
</feature>
<gene>
    <name evidence="12" type="primary">tenS</name>
    <name type="ORF">BBA_07338</name>
</gene>
<evidence type="ECO:0000250" key="1">
    <source>
        <dbReference type="UniProtKB" id="A0JJU1"/>
    </source>
</evidence>
<evidence type="ECO:0000255" key="2"/>
<evidence type="ECO:0000255" key="3">
    <source>
        <dbReference type="PROSITE-ProRule" id="PRU00258"/>
    </source>
</evidence>
<evidence type="ECO:0000255" key="4">
    <source>
        <dbReference type="PROSITE-ProRule" id="PRU01348"/>
    </source>
</evidence>
<evidence type="ECO:0000255" key="5">
    <source>
        <dbReference type="PROSITE-ProRule" id="PRU01363"/>
    </source>
</evidence>
<evidence type="ECO:0000256" key="6">
    <source>
        <dbReference type="SAM" id="MobiDB-lite"/>
    </source>
</evidence>
<evidence type="ECO:0000269" key="7">
    <source>
    </source>
</evidence>
<evidence type="ECO:0000269" key="8">
    <source>
    </source>
</evidence>
<evidence type="ECO:0000269" key="9">
    <source>
    </source>
</evidence>
<evidence type="ECO:0000269" key="10">
    <source>
    </source>
</evidence>
<evidence type="ECO:0000303" key="11">
    <source>
    </source>
</evidence>
<evidence type="ECO:0000303" key="12">
    <source>
    </source>
</evidence>
<evidence type="ECO:0000305" key="13"/>
<evidence type="ECO:0000305" key="14">
    <source>
    </source>
</evidence>
<keyword id="KW-0436">Ligase</keyword>
<keyword id="KW-0489">Methyltransferase</keyword>
<keyword id="KW-0511">Multifunctional enzyme</keyword>
<keyword id="KW-0560">Oxidoreductase</keyword>
<keyword id="KW-0596">Phosphopantetheine</keyword>
<keyword id="KW-0597">Phosphoprotein</keyword>
<keyword id="KW-1185">Reference proteome</keyword>
<keyword id="KW-0677">Repeat</keyword>
<keyword id="KW-0808">Transferase</keyword>
<accession>J4KMC1</accession>
<comment type="function">
    <text evidence="7 8 9 10">Hybrid PKS-NRPS synthetase; part of the gene cluster that mediates the biosynthesis of tenellin-type 2-pyridones, iron-chelating compounds involved in iron stress tolerance, competition with the natural competitor fungus Metarhizium robertsii and insect hosts infection (PubMed:17216664, PubMed:18266306, PubMed:20575135, PubMed:34903054). TenS catalyzes the assembly of the polyketide-amino acid backbone (PubMed:18266306, PubMed:34903054). Because tenS lacks a designated enoylreductase (ER) domain, the required activity is provided the enoyl reductase tenC (PubMed:18266306, PubMed:34903054). Upon formation of the polyketide backbone on the thiotemplate, the triketide is transferred to the NRPS module and linked to tyrosine to produce the pyrrolidine-2-dione intermediates, including pretellinin A, 11-hydropretellenin A, 12-hydropretellenin A, 13-hydropretellenin A, 14-hydropretellenin A, 12-oxopretellenin A and prototellinin D (PubMed:18266306, PubMed:34903054). The pathway begins with the assembly of the polyketide-amino acid backbone by the hybrid PKS-NRPS tenS with the help of the enoyl reductase tenC. These enzymes catalyze the synthesis of the pyrrolidine-2-dione intermediates pretellinin A, 11-hydropretellenin A, 12-hydropretellenin A, 13-hydropretellenin A, 14-hydropretellenin A, 12-oxopretellenin A and prototellinin D. The cytochrome P450 monooxygenase tenA then catalyzes an oxidative ring expansion of pretenellin A and 14-hydropretellenin A to form the 2-pyridone core, leading to pretenellin B and pyridovericin, respectively. The cytochrome P450 monooxygenase tenB is then required for the selective N-hydroxylation of the 2-pyridone nitrogen of yield tellinin and 15-hydroxytellenin (15-HT), respectively. The UDP-glucosyltransferase GT1 and the methyltransferase MT1, located outside the tenS gene cluster, contribute to the stepwise glycosylation and methylation of 15-HT to obtain the glycoside pyridovericin-N-O-(4-O-methyl-beta-D-glucopyranoside) (PMGP). Additional related compounds such as 1-O-methyl-15-HT, (8Z)-1-O-methyl-15-HT, and O-methyltenellin A are also produced but the enzymes involved in their biosynthesis have still to be determined (PubMed:34903054).</text>
</comment>
<comment type="pathway">
    <text evidence="7 8 9 10">Secondary metabolite biosynthesis.</text>
</comment>
<comment type="induction">
    <text evidence="7">Expression is positively regulated by the cluster-specific transcription factor tenR and is induced during cocultures with the natural competitor fungus Metarhizium robertsii.</text>
</comment>
<comment type="domain">
    <text evidence="14">NRP synthetases are composed of discrete domains (adenylation (A), thiolation (T) or peptidyl carrier protein (PCP) and condensation (C) domains) which when grouped together are referred to as a single module. Each module is responsible for the recognition (via the A domain) and incorporation of a single amino acid into the growing peptide product. Thus, an NRP synthetase is generally composed of one or more modules and can terminate in a thioesterase domain (TE) that releases the newly synthesized peptide from the enzyme. TenS contains also a polyketide synthase module (PKS) consisting of several catalytic domains including a ketoacyl synthase domain (KS), a malonyl-CoA:ACP transacylase domain (MAT), a dehydratase domain (DH), a methyltransferase domain (MT), and a ketoreductase domain (KR). Instead of a thioesterase domain (TE), tenS finishes with a reductase-like domain (RED) for peptide release. TenS has the following architecture: KS-MAT-DH-MT-KR-PCP-C-A-T-RED.</text>
</comment>
<comment type="disruption phenotype">
    <text evidence="7 10">Impairs the production of tenellin-type 2-pyridones and their intermediates.</text>
</comment>
<comment type="similarity">
    <text evidence="13">In the C-terminal section; belongs to the NRP synthetase family.</text>
</comment>
<organism>
    <name type="scientific">Beauveria bassiana (strain ARSEF 2860)</name>
    <name type="common">White muscardine disease fungus</name>
    <name type="synonym">Tritirachium shiotae</name>
    <dbReference type="NCBI Taxonomy" id="655819"/>
    <lineage>
        <taxon>Eukaryota</taxon>
        <taxon>Fungi</taxon>
        <taxon>Dikarya</taxon>
        <taxon>Ascomycota</taxon>
        <taxon>Pezizomycotina</taxon>
        <taxon>Sordariomycetes</taxon>
        <taxon>Hypocreomycetidae</taxon>
        <taxon>Hypocreales</taxon>
        <taxon>Cordycipitaceae</taxon>
        <taxon>Beauveria</taxon>
    </lineage>
</organism>
<proteinExistence type="evidence at protein level"/>
<name>TENS_BEAB2</name>
<dbReference type="EC" id="2.3.1.-" evidence="7 8"/>
<dbReference type="EC" id="6.3.2.-" evidence="7 8"/>
<dbReference type="EMBL" id="JH725173">
    <property type="protein sequence ID" value="EJP63694.1"/>
    <property type="molecule type" value="Genomic_DNA"/>
</dbReference>
<dbReference type="RefSeq" id="XP_008600657.1">
    <property type="nucleotide sequence ID" value="XM_008602435.1"/>
</dbReference>
<dbReference type="SMR" id="J4KMC1"/>
<dbReference type="STRING" id="655819.J4KMC1"/>
<dbReference type="GeneID" id="19890350"/>
<dbReference type="HOGENOM" id="CLU_000022_37_4_1"/>
<dbReference type="InParanoid" id="J4KMC1"/>
<dbReference type="OrthoDB" id="7165at474943"/>
<dbReference type="Proteomes" id="UP000002762">
    <property type="component" value="Unassembled WGS sequence"/>
</dbReference>
<dbReference type="GO" id="GO:0004312">
    <property type="term" value="F:fatty acid synthase activity"/>
    <property type="evidence" value="ECO:0007669"/>
    <property type="project" value="TreeGrafter"/>
</dbReference>
<dbReference type="GO" id="GO:0016874">
    <property type="term" value="F:ligase activity"/>
    <property type="evidence" value="ECO:0007669"/>
    <property type="project" value="UniProtKB-KW"/>
</dbReference>
<dbReference type="GO" id="GO:0008168">
    <property type="term" value="F:methyltransferase activity"/>
    <property type="evidence" value="ECO:0007669"/>
    <property type="project" value="UniProtKB-KW"/>
</dbReference>
<dbReference type="GO" id="GO:0016491">
    <property type="term" value="F:oxidoreductase activity"/>
    <property type="evidence" value="ECO:0007669"/>
    <property type="project" value="UniProtKB-KW"/>
</dbReference>
<dbReference type="GO" id="GO:0031177">
    <property type="term" value="F:phosphopantetheine binding"/>
    <property type="evidence" value="ECO:0007669"/>
    <property type="project" value="InterPro"/>
</dbReference>
<dbReference type="GO" id="GO:0006633">
    <property type="term" value="P:fatty acid biosynthetic process"/>
    <property type="evidence" value="ECO:0007669"/>
    <property type="project" value="TreeGrafter"/>
</dbReference>
<dbReference type="GO" id="GO:0032259">
    <property type="term" value="P:methylation"/>
    <property type="evidence" value="ECO:0007669"/>
    <property type="project" value="UniProtKB-KW"/>
</dbReference>
<dbReference type="GO" id="GO:0009403">
    <property type="term" value="P:toxin biosynthetic process"/>
    <property type="evidence" value="ECO:0007669"/>
    <property type="project" value="UniProtKB-ARBA"/>
</dbReference>
<dbReference type="CDD" id="cd05930">
    <property type="entry name" value="A_NRPS"/>
    <property type="match status" value="1"/>
</dbReference>
<dbReference type="CDD" id="cd02440">
    <property type="entry name" value="AdoMet_MTases"/>
    <property type="match status" value="1"/>
</dbReference>
<dbReference type="CDD" id="cd19532">
    <property type="entry name" value="C_PKS-NRPS"/>
    <property type="match status" value="1"/>
</dbReference>
<dbReference type="CDD" id="cd00833">
    <property type="entry name" value="PKS"/>
    <property type="match status" value="1"/>
</dbReference>
<dbReference type="Gene3D" id="3.30.300.30">
    <property type="match status" value="1"/>
</dbReference>
<dbReference type="Gene3D" id="3.30.70.3290">
    <property type="match status" value="1"/>
</dbReference>
<dbReference type="Gene3D" id="3.40.47.10">
    <property type="match status" value="1"/>
</dbReference>
<dbReference type="Gene3D" id="1.10.1200.10">
    <property type="entry name" value="ACP-like"/>
    <property type="match status" value="2"/>
</dbReference>
<dbReference type="Gene3D" id="3.30.559.10">
    <property type="entry name" value="Chloramphenicol acetyltransferase-like domain"/>
    <property type="match status" value="1"/>
</dbReference>
<dbReference type="Gene3D" id="3.40.366.10">
    <property type="entry name" value="Malonyl-Coenzyme A Acyl Carrier Protein, domain 2"/>
    <property type="match status" value="1"/>
</dbReference>
<dbReference type="Gene3D" id="3.40.50.12780">
    <property type="entry name" value="N-terminal domain of ligase-like"/>
    <property type="match status" value="1"/>
</dbReference>
<dbReference type="Gene3D" id="3.40.50.720">
    <property type="entry name" value="NAD(P)-binding Rossmann-like Domain"/>
    <property type="match status" value="2"/>
</dbReference>
<dbReference type="Gene3D" id="3.30.559.30">
    <property type="entry name" value="Nonribosomal peptide synthetase, condensation domain"/>
    <property type="match status" value="1"/>
</dbReference>
<dbReference type="Gene3D" id="3.10.129.110">
    <property type="entry name" value="Polyketide synthase dehydratase"/>
    <property type="match status" value="1"/>
</dbReference>
<dbReference type="Gene3D" id="3.40.50.150">
    <property type="entry name" value="Vaccinia Virus protein VP39"/>
    <property type="match status" value="1"/>
</dbReference>
<dbReference type="InterPro" id="IPR010071">
    <property type="entry name" value="AA_adenyl_dom"/>
</dbReference>
<dbReference type="InterPro" id="IPR001227">
    <property type="entry name" value="Ac_transferase_dom_sf"/>
</dbReference>
<dbReference type="InterPro" id="IPR036736">
    <property type="entry name" value="ACP-like_sf"/>
</dbReference>
<dbReference type="InterPro" id="IPR014043">
    <property type="entry name" value="Acyl_transferase_dom"/>
</dbReference>
<dbReference type="InterPro" id="IPR016035">
    <property type="entry name" value="Acyl_Trfase/lysoPLipase"/>
</dbReference>
<dbReference type="InterPro" id="IPR045851">
    <property type="entry name" value="AMP-bd_C_sf"/>
</dbReference>
<dbReference type="InterPro" id="IPR020845">
    <property type="entry name" value="AMP-binding_CS"/>
</dbReference>
<dbReference type="InterPro" id="IPR000873">
    <property type="entry name" value="AMP-dep_synth/lig_dom"/>
</dbReference>
<dbReference type="InterPro" id="IPR042099">
    <property type="entry name" value="ANL_N_sf"/>
</dbReference>
<dbReference type="InterPro" id="IPR023213">
    <property type="entry name" value="CAT-like_dom_sf"/>
</dbReference>
<dbReference type="InterPro" id="IPR001242">
    <property type="entry name" value="Condensatn"/>
</dbReference>
<dbReference type="InterPro" id="IPR013120">
    <property type="entry name" value="Far_NAD-bd"/>
</dbReference>
<dbReference type="InterPro" id="IPR014031">
    <property type="entry name" value="Ketoacyl_synth_C"/>
</dbReference>
<dbReference type="InterPro" id="IPR014030">
    <property type="entry name" value="Ketoacyl_synth_N"/>
</dbReference>
<dbReference type="InterPro" id="IPR016036">
    <property type="entry name" value="Malonyl_transacylase_ACP-bd"/>
</dbReference>
<dbReference type="InterPro" id="IPR013217">
    <property type="entry name" value="Methyltransf_12"/>
</dbReference>
<dbReference type="InterPro" id="IPR036291">
    <property type="entry name" value="NAD(P)-bd_dom_sf"/>
</dbReference>
<dbReference type="InterPro" id="IPR032821">
    <property type="entry name" value="PKS_assoc"/>
</dbReference>
<dbReference type="InterPro" id="IPR020841">
    <property type="entry name" value="PKS_Beta-ketoAc_synthase_dom"/>
</dbReference>
<dbReference type="InterPro" id="IPR042104">
    <property type="entry name" value="PKS_dehydratase_sf"/>
</dbReference>
<dbReference type="InterPro" id="IPR020807">
    <property type="entry name" value="PKS_DH"/>
</dbReference>
<dbReference type="InterPro" id="IPR049551">
    <property type="entry name" value="PKS_DH_C"/>
</dbReference>
<dbReference type="InterPro" id="IPR049552">
    <property type="entry name" value="PKS_DH_N"/>
</dbReference>
<dbReference type="InterPro" id="IPR013968">
    <property type="entry name" value="PKS_KR"/>
</dbReference>
<dbReference type="InterPro" id="IPR049900">
    <property type="entry name" value="PKS_mFAS_DH"/>
</dbReference>
<dbReference type="InterPro" id="IPR050091">
    <property type="entry name" value="PKS_NRPS_Biosynth_Enz"/>
</dbReference>
<dbReference type="InterPro" id="IPR020806">
    <property type="entry name" value="PKS_PP-bd"/>
</dbReference>
<dbReference type="InterPro" id="IPR009081">
    <property type="entry name" value="PP-bd_ACP"/>
</dbReference>
<dbReference type="InterPro" id="IPR006162">
    <property type="entry name" value="Ppantetheine_attach_site"/>
</dbReference>
<dbReference type="InterPro" id="IPR029063">
    <property type="entry name" value="SAM-dependent_MTases_sf"/>
</dbReference>
<dbReference type="InterPro" id="IPR016039">
    <property type="entry name" value="Thiolase-like"/>
</dbReference>
<dbReference type="NCBIfam" id="TIGR01733">
    <property type="entry name" value="AA-adenyl-dom"/>
    <property type="match status" value="1"/>
</dbReference>
<dbReference type="PANTHER" id="PTHR43775">
    <property type="entry name" value="FATTY ACID SYNTHASE"/>
    <property type="match status" value="1"/>
</dbReference>
<dbReference type="PANTHER" id="PTHR43775:SF20">
    <property type="entry name" value="HYBRID PKS-NRPS SYNTHETASE APDA"/>
    <property type="match status" value="1"/>
</dbReference>
<dbReference type="Pfam" id="PF00698">
    <property type="entry name" value="Acyl_transf_1"/>
    <property type="match status" value="1"/>
</dbReference>
<dbReference type="Pfam" id="PF00501">
    <property type="entry name" value="AMP-binding"/>
    <property type="match status" value="1"/>
</dbReference>
<dbReference type="Pfam" id="PF00668">
    <property type="entry name" value="Condensation"/>
    <property type="match status" value="1"/>
</dbReference>
<dbReference type="Pfam" id="PF16197">
    <property type="entry name" value="KAsynt_C_assoc"/>
    <property type="match status" value="1"/>
</dbReference>
<dbReference type="Pfam" id="PF00109">
    <property type="entry name" value="ketoacyl-synt"/>
    <property type="match status" value="1"/>
</dbReference>
<dbReference type="Pfam" id="PF02801">
    <property type="entry name" value="Ketoacyl-synt_C"/>
    <property type="match status" value="1"/>
</dbReference>
<dbReference type="Pfam" id="PF08659">
    <property type="entry name" value="KR"/>
    <property type="match status" value="1"/>
</dbReference>
<dbReference type="Pfam" id="PF08242">
    <property type="entry name" value="Methyltransf_12"/>
    <property type="match status" value="1"/>
</dbReference>
<dbReference type="Pfam" id="PF07993">
    <property type="entry name" value="NAD_binding_4"/>
    <property type="match status" value="1"/>
</dbReference>
<dbReference type="Pfam" id="PF21089">
    <property type="entry name" value="PKS_DH_N"/>
    <property type="match status" value="1"/>
</dbReference>
<dbReference type="Pfam" id="PF00550">
    <property type="entry name" value="PP-binding"/>
    <property type="match status" value="2"/>
</dbReference>
<dbReference type="Pfam" id="PF14765">
    <property type="entry name" value="PS-DH"/>
    <property type="match status" value="1"/>
</dbReference>
<dbReference type="SMART" id="SM00827">
    <property type="entry name" value="PKS_AT"/>
    <property type="match status" value="1"/>
</dbReference>
<dbReference type="SMART" id="SM00826">
    <property type="entry name" value="PKS_DH"/>
    <property type="match status" value="1"/>
</dbReference>
<dbReference type="SMART" id="SM00822">
    <property type="entry name" value="PKS_KR"/>
    <property type="match status" value="1"/>
</dbReference>
<dbReference type="SMART" id="SM00825">
    <property type="entry name" value="PKS_KS"/>
    <property type="match status" value="1"/>
</dbReference>
<dbReference type="SMART" id="SM00823">
    <property type="entry name" value="PKS_PP"/>
    <property type="match status" value="2"/>
</dbReference>
<dbReference type="SUPFAM" id="SSF56801">
    <property type="entry name" value="Acetyl-CoA synthetase-like"/>
    <property type="match status" value="1"/>
</dbReference>
<dbReference type="SUPFAM" id="SSF47336">
    <property type="entry name" value="ACP-like"/>
    <property type="match status" value="2"/>
</dbReference>
<dbReference type="SUPFAM" id="SSF52777">
    <property type="entry name" value="CoA-dependent acyltransferases"/>
    <property type="match status" value="2"/>
</dbReference>
<dbReference type="SUPFAM" id="SSF52151">
    <property type="entry name" value="FabD/lysophospholipase-like"/>
    <property type="match status" value="1"/>
</dbReference>
<dbReference type="SUPFAM" id="SSF51735">
    <property type="entry name" value="NAD(P)-binding Rossmann-fold domains"/>
    <property type="match status" value="2"/>
</dbReference>
<dbReference type="SUPFAM" id="SSF55048">
    <property type="entry name" value="Probable ACP-binding domain of malonyl-CoA ACP transacylase"/>
    <property type="match status" value="1"/>
</dbReference>
<dbReference type="SUPFAM" id="SSF53335">
    <property type="entry name" value="S-adenosyl-L-methionine-dependent methyltransferases"/>
    <property type="match status" value="1"/>
</dbReference>
<dbReference type="SUPFAM" id="SSF53901">
    <property type="entry name" value="Thiolase-like"/>
    <property type="match status" value="1"/>
</dbReference>
<dbReference type="PROSITE" id="PS00455">
    <property type="entry name" value="AMP_BINDING"/>
    <property type="match status" value="1"/>
</dbReference>
<dbReference type="PROSITE" id="PS50075">
    <property type="entry name" value="CARRIER"/>
    <property type="match status" value="2"/>
</dbReference>
<dbReference type="PROSITE" id="PS52004">
    <property type="entry name" value="KS3_2"/>
    <property type="match status" value="1"/>
</dbReference>
<dbReference type="PROSITE" id="PS00012">
    <property type="entry name" value="PHOSPHOPANTETHEINE"/>
    <property type="match status" value="1"/>
</dbReference>
<dbReference type="PROSITE" id="PS52019">
    <property type="entry name" value="PKS_MFAS_DH"/>
    <property type="match status" value="1"/>
</dbReference>
<protein>
    <recommendedName>
        <fullName evidence="11">Tenellin synthetase</fullName>
        <shortName evidence="11">TENS</shortName>
        <ecNumber evidence="7 8">2.3.1.-</ecNumber>
        <ecNumber evidence="7 8">6.3.2.-</ecNumber>
    </recommendedName>
    <alternativeName>
        <fullName evidence="11">Hybrid PKS-NRPS synthetase tenS</fullName>
    </alternativeName>
    <alternativeName>
        <fullName evidence="11">Tenellin biosynthesis protein S</fullName>
    </alternativeName>
</protein>